<organism>
    <name type="scientific">Caulobacter sp. (strain K31)</name>
    <dbReference type="NCBI Taxonomy" id="366602"/>
    <lineage>
        <taxon>Bacteria</taxon>
        <taxon>Pseudomonadati</taxon>
        <taxon>Pseudomonadota</taxon>
        <taxon>Alphaproteobacteria</taxon>
        <taxon>Caulobacterales</taxon>
        <taxon>Caulobacteraceae</taxon>
        <taxon>Caulobacter</taxon>
    </lineage>
</organism>
<sequence length="692" mass="76171">MARQHKIEDYRNFGIMAHIDAGKTTTTERILYYTGKSHKIGEVHDGAATMDWMDQEQERGITITSAATTAFWKEKRLNIIDTPGHVDFTIEVERSLRVLDGAVAVLDGNAGVEPQTETVWRQADKYKVPRIVFVNKMDKIGADFDKSVESIRDRLGAKAVPIQFPIGSETSLSGLVDLVRMKAVVWDNDALGANFRDEEIPADLMAKAVEAHAYLVEAAVEMDDEAMEAYLGGEEPSEAVLKKCIRKAVLVGAFYPILCGSAFKNKGVQTLLDAVVDYLPSPLDIPPTKGIDFKTEEEVVRHASDEEPLSVLAFKIMDDPFVGSLTFCRIYSGKLETGMSLLNATRDKRERVGRMLLMHSNNREDIKEAYAGDIVALAGLKDTRTGDTLCDPLKSPVILERMEFPAPVIEIAVEPKSKADQEKLGVALAKLAAEDPSFTVSTDFESGQTILKGMGELHLDIKIDILKRTYKVEANIGAPQVAYRESLGRKVDIDYTHKKQTGGTGQFARVMITFEPGEPGSGFVFENSIVGGAVPKEYIPGVEKGLMSVKDNGLLAGFPLIDFKATLTDGKYHDVDSSVLAFEIASRAAFKELREKGAPKLLEPIMAVEVVTPEEYLGSVIGDLNSRRGMIQGQDMRGNATVVNAYVPLANMFGYVNTLRGMSQGRAQFTMQYDHYEPVPQHVADEVIKKYA</sequence>
<keyword id="KW-0963">Cytoplasm</keyword>
<keyword id="KW-0251">Elongation factor</keyword>
<keyword id="KW-0342">GTP-binding</keyword>
<keyword id="KW-0547">Nucleotide-binding</keyword>
<keyword id="KW-0648">Protein biosynthesis</keyword>
<accession>B0SUQ6</accession>
<evidence type="ECO:0000255" key="1">
    <source>
        <dbReference type="HAMAP-Rule" id="MF_00054"/>
    </source>
</evidence>
<dbReference type="EMBL" id="CP000927">
    <property type="protein sequence ID" value="ABZ69934.1"/>
    <property type="molecule type" value="Genomic_DNA"/>
</dbReference>
<dbReference type="SMR" id="B0SUQ6"/>
<dbReference type="STRING" id="366602.Caul_0803"/>
<dbReference type="KEGG" id="cak:Caul_0803"/>
<dbReference type="eggNOG" id="COG0480">
    <property type="taxonomic scope" value="Bacteria"/>
</dbReference>
<dbReference type="HOGENOM" id="CLU_002794_4_1_5"/>
<dbReference type="OrthoDB" id="9802948at2"/>
<dbReference type="GO" id="GO:0005737">
    <property type="term" value="C:cytoplasm"/>
    <property type="evidence" value="ECO:0007669"/>
    <property type="project" value="UniProtKB-SubCell"/>
</dbReference>
<dbReference type="GO" id="GO:0005525">
    <property type="term" value="F:GTP binding"/>
    <property type="evidence" value="ECO:0007669"/>
    <property type="project" value="UniProtKB-UniRule"/>
</dbReference>
<dbReference type="GO" id="GO:0003924">
    <property type="term" value="F:GTPase activity"/>
    <property type="evidence" value="ECO:0007669"/>
    <property type="project" value="InterPro"/>
</dbReference>
<dbReference type="GO" id="GO:0003746">
    <property type="term" value="F:translation elongation factor activity"/>
    <property type="evidence" value="ECO:0007669"/>
    <property type="project" value="UniProtKB-UniRule"/>
</dbReference>
<dbReference type="GO" id="GO:0032790">
    <property type="term" value="P:ribosome disassembly"/>
    <property type="evidence" value="ECO:0007669"/>
    <property type="project" value="TreeGrafter"/>
</dbReference>
<dbReference type="CDD" id="cd01886">
    <property type="entry name" value="EF-G"/>
    <property type="match status" value="1"/>
</dbReference>
<dbReference type="CDD" id="cd16262">
    <property type="entry name" value="EFG_III"/>
    <property type="match status" value="1"/>
</dbReference>
<dbReference type="CDD" id="cd01434">
    <property type="entry name" value="EFG_mtEFG1_IV"/>
    <property type="match status" value="1"/>
</dbReference>
<dbReference type="CDD" id="cd03713">
    <property type="entry name" value="EFG_mtEFG_C"/>
    <property type="match status" value="1"/>
</dbReference>
<dbReference type="CDD" id="cd04088">
    <property type="entry name" value="EFG_mtEFG_II"/>
    <property type="match status" value="1"/>
</dbReference>
<dbReference type="FunFam" id="2.40.30.10:FF:000006">
    <property type="entry name" value="Elongation factor G"/>
    <property type="match status" value="1"/>
</dbReference>
<dbReference type="FunFam" id="3.30.230.10:FF:000003">
    <property type="entry name" value="Elongation factor G"/>
    <property type="match status" value="1"/>
</dbReference>
<dbReference type="FunFam" id="3.30.70.240:FF:000001">
    <property type="entry name" value="Elongation factor G"/>
    <property type="match status" value="1"/>
</dbReference>
<dbReference type="FunFam" id="3.30.70.870:FF:000001">
    <property type="entry name" value="Elongation factor G"/>
    <property type="match status" value="1"/>
</dbReference>
<dbReference type="FunFam" id="3.40.50.300:FF:000029">
    <property type="entry name" value="Elongation factor G"/>
    <property type="match status" value="1"/>
</dbReference>
<dbReference type="Gene3D" id="3.30.230.10">
    <property type="match status" value="1"/>
</dbReference>
<dbReference type="Gene3D" id="3.30.70.240">
    <property type="match status" value="1"/>
</dbReference>
<dbReference type="Gene3D" id="3.30.70.870">
    <property type="entry name" value="Elongation Factor G (Translational Gtpase), domain 3"/>
    <property type="match status" value="1"/>
</dbReference>
<dbReference type="Gene3D" id="3.40.50.300">
    <property type="entry name" value="P-loop containing nucleotide triphosphate hydrolases"/>
    <property type="match status" value="1"/>
</dbReference>
<dbReference type="Gene3D" id="2.40.30.10">
    <property type="entry name" value="Translation factors"/>
    <property type="match status" value="1"/>
</dbReference>
<dbReference type="HAMAP" id="MF_00054_B">
    <property type="entry name" value="EF_G_EF_2_B"/>
    <property type="match status" value="1"/>
</dbReference>
<dbReference type="InterPro" id="IPR053905">
    <property type="entry name" value="EF-G-like_DII"/>
</dbReference>
<dbReference type="InterPro" id="IPR041095">
    <property type="entry name" value="EFG_II"/>
</dbReference>
<dbReference type="InterPro" id="IPR009022">
    <property type="entry name" value="EFG_III"/>
</dbReference>
<dbReference type="InterPro" id="IPR035647">
    <property type="entry name" value="EFG_III/V"/>
</dbReference>
<dbReference type="InterPro" id="IPR047872">
    <property type="entry name" value="EFG_IV"/>
</dbReference>
<dbReference type="InterPro" id="IPR035649">
    <property type="entry name" value="EFG_V"/>
</dbReference>
<dbReference type="InterPro" id="IPR000640">
    <property type="entry name" value="EFG_V-like"/>
</dbReference>
<dbReference type="InterPro" id="IPR031157">
    <property type="entry name" value="G_TR_CS"/>
</dbReference>
<dbReference type="InterPro" id="IPR027417">
    <property type="entry name" value="P-loop_NTPase"/>
</dbReference>
<dbReference type="InterPro" id="IPR020568">
    <property type="entry name" value="Ribosomal_Su5_D2-typ_SF"/>
</dbReference>
<dbReference type="InterPro" id="IPR014721">
    <property type="entry name" value="Ribsml_uS5_D2-typ_fold_subgr"/>
</dbReference>
<dbReference type="InterPro" id="IPR005225">
    <property type="entry name" value="Small_GTP-bd"/>
</dbReference>
<dbReference type="InterPro" id="IPR000795">
    <property type="entry name" value="T_Tr_GTP-bd_dom"/>
</dbReference>
<dbReference type="InterPro" id="IPR009000">
    <property type="entry name" value="Transl_B-barrel_sf"/>
</dbReference>
<dbReference type="InterPro" id="IPR004540">
    <property type="entry name" value="Transl_elong_EFG/EF2"/>
</dbReference>
<dbReference type="InterPro" id="IPR005517">
    <property type="entry name" value="Transl_elong_EFG/EF2_IV"/>
</dbReference>
<dbReference type="NCBIfam" id="TIGR00484">
    <property type="entry name" value="EF-G"/>
    <property type="match status" value="1"/>
</dbReference>
<dbReference type="NCBIfam" id="NF009381">
    <property type="entry name" value="PRK12740.1-5"/>
    <property type="match status" value="1"/>
</dbReference>
<dbReference type="NCBIfam" id="TIGR00231">
    <property type="entry name" value="small_GTP"/>
    <property type="match status" value="1"/>
</dbReference>
<dbReference type="PANTHER" id="PTHR43261:SF1">
    <property type="entry name" value="RIBOSOME-RELEASING FACTOR 2, MITOCHONDRIAL"/>
    <property type="match status" value="1"/>
</dbReference>
<dbReference type="PANTHER" id="PTHR43261">
    <property type="entry name" value="TRANSLATION ELONGATION FACTOR G-RELATED"/>
    <property type="match status" value="1"/>
</dbReference>
<dbReference type="Pfam" id="PF22042">
    <property type="entry name" value="EF-G_D2"/>
    <property type="match status" value="1"/>
</dbReference>
<dbReference type="Pfam" id="PF00679">
    <property type="entry name" value="EFG_C"/>
    <property type="match status" value="1"/>
</dbReference>
<dbReference type="Pfam" id="PF14492">
    <property type="entry name" value="EFG_III"/>
    <property type="match status" value="1"/>
</dbReference>
<dbReference type="Pfam" id="PF03764">
    <property type="entry name" value="EFG_IV"/>
    <property type="match status" value="1"/>
</dbReference>
<dbReference type="Pfam" id="PF00009">
    <property type="entry name" value="GTP_EFTU"/>
    <property type="match status" value="1"/>
</dbReference>
<dbReference type="PRINTS" id="PR00315">
    <property type="entry name" value="ELONGATNFCT"/>
</dbReference>
<dbReference type="SMART" id="SM00838">
    <property type="entry name" value="EFG_C"/>
    <property type="match status" value="1"/>
</dbReference>
<dbReference type="SMART" id="SM00889">
    <property type="entry name" value="EFG_IV"/>
    <property type="match status" value="1"/>
</dbReference>
<dbReference type="SUPFAM" id="SSF54980">
    <property type="entry name" value="EF-G C-terminal domain-like"/>
    <property type="match status" value="2"/>
</dbReference>
<dbReference type="SUPFAM" id="SSF52540">
    <property type="entry name" value="P-loop containing nucleoside triphosphate hydrolases"/>
    <property type="match status" value="1"/>
</dbReference>
<dbReference type="SUPFAM" id="SSF54211">
    <property type="entry name" value="Ribosomal protein S5 domain 2-like"/>
    <property type="match status" value="1"/>
</dbReference>
<dbReference type="SUPFAM" id="SSF50447">
    <property type="entry name" value="Translation proteins"/>
    <property type="match status" value="1"/>
</dbReference>
<dbReference type="PROSITE" id="PS00301">
    <property type="entry name" value="G_TR_1"/>
    <property type="match status" value="1"/>
</dbReference>
<dbReference type="PROSITE" id="PS51722">
    <property type="entry name" value="G_TR_2"/>
    <property type="match status" value="1"/>
</dbReference>
<comment type="function">
    <text evidence="1">Catalyzes the GTP-dependent ribosomal translocation step during translation elongation. During this step, the ribosome changes from the pre-translocational (PRE) to the post-translocational (POST) state as the newly formed A-site-bound peptidyl-tRNA and P-site-bound deacylated tRNA move to the P and E sites, respectively. Catalyzes the coordinated movement of the two tRNA molecules, the mRNA and conformational changes in the ribosome.</text>
</comment>
<comment type="subcellular location">
    <subcellularLocation>
        <location evidence="1">Cytoplasm</location>
    </subcellularLocation>
</comment>
<comment type="similarity">
    <text evidence="1">Belongs to the TRAFAC class translation factor GTPase superfamily. Classic translation factor GTPase family. EF-G/EF-2 subfamily.</text>
</comment>
<name>EFG_CAUSK</name>
<reference key="1">
    <citation type="submission" date="2008-01" db="EMBL/GenBank/DDBJ databases">
        <title>Complete sequence of chromosome of Caulobacter sp. K31.</title>
        <authorList>
            <consortium name="US DOE Joint Genome Institute"/>
            <person name="Copeland A."/>
            <person name="Lucas S."/>
            <person name="Lapidus A."/>
            <person name="Barry K."/>
            <person name="Glavina del Rio T."/>
            <person name="Dalin E."/>
            <person name="Tice H."/>
            <person name="Pitluck S."/>
            <person name="Bruce D."/>
            <person name="Goodwin L."/>
            <person name="Thompson L.S."/>
            <person name="Brettin T."/>
            <person name="Detter J.C."/>
            <person name="Han C."/>
            <person name="Schmutz J."/>
            <person name="Larimer F."/>
            <person name="Land M."/>
            <person name="Hauser L."/>
            <person name="Kyrpides N."/>
            <person name="Kim E."/>
            <person name="Stephens C."/>
            <person name="Richardson P."/>
        </authorList>
    </citation>
    <scope>NUCLEOTIDE SEQUENCE [LARGE SCALE GENOMIC DNA]</scope>
    <source>
        <strain>K31</strain>
    </source>
</reference>
<protein>
    <recommendedName>
        <fullName evidence="1">Elongation factor G</fullName>
        <shortName evidence="1">EF-G</shortName>
    </recommendedName>
</protein>
<gene>
    <name evidence="1" type="primary">fusA</name>
    <name type="ordered locus">Caul_0803</name>
</gene>
<proteinExistence type="inferred from homology"/>
<feature type="chain" id="PRO_1000074950" description="Elongation factor G">
    <location>
        <begin position="1"/>
        <end position="692"/>
    </location>
</feature>
<feature type="domain" description="tr-type G">
    <location>
        <begin position="8"/>
        <end position="283"/>
    </location>
</feature>
<feature type="binding site" evidence="1">
    <location>
        <begin position="17"/>
        <end position="24"/>
    </location>
    <ligand>
        <name>GTP</name>
        <dbReference type="ChEBI" id="CHEBI:37565"/>
    </ligand>
</feature>
<feature type="binding site" evidence="1">
    <location>
        <begin position="81"/>
        <end position="85"/>
    </location>
    <ligand>
        <name>GTP</name>
        <dbReference type="ChEBI" id="CHEBI:37565"/>
    </ligand>
</feature>
<feature type="binding site" evidence="1">
    <location>
        <begin position="135"/>
        <end position="138"/>
    </location>
    <ligand>
        <name>GTP</name>
        <dbReference type="ChEBI" id="CHEBI:37565"/>
    </ligand>
</feature>